<reference key="1">
    <citation type="journal article" date="1992" name="J. Bacteriol.">
        <title>Gene structure of Enterococcus hirae (Streptococcus faecalis) F1F0-ATPase, which functions as a regulator of cytoplasmic pH.</title>
        <authorList>
            <person name="Shibata C."/>
            <person name="Ehara T."/>
            <person name="Tomura K."/>
            <person name="Igarashi K."/>
            <person name="Kobayashi H."/>
        </authorList>
    </citation>
    <scope>NUCLEOTIDE SEQUENCE [GENOMIC DNA]</scope>
    <source>
        <strain>ATCC 9790 / DSM 20160 / JCM 8729 / LMG 6399 / NBRC 3181 / NCIMB 6459 / NCDO 1258 / NCTC 12367 / WDCM 00089 / R</strain>
    </source>
</reference>
<reference key="2">
    <citation type="journal article" date="2012" name="J. Bacteriol.">
        <title>Genome sequence of Enterococcus hirae (Streptococcus faecalis) ATCC 9790, a model organism for the study of ion transport, bioenergetics, and copper homeostasis.</title>
        <authorList>
            <person name="Gaechter T."/>
            <person name="Wunderlin C."/>
            <person name="Schmidheini T."/>
            <person name="Solioz M."/>
        </authorList>
    </citation>
    <scope>NUCLEOTIDE SEQUENCE [LARGE SCALE GENOMIC DNA]</scope>
    <source>
        <strain>ATCC 9790 / DSM 20160 / JCM 8729 / LMG 6399 / NBRC 3181 / NCIMB 6459 / NCDO 1258 / NCTC 12367 / WDCM 00089 / R</strain>
    </source>
</reference>
<protein>
    <recommendedName>
        <fullName evidence="1">ATP synthase subunit delta</fullName>
    </recommendedName>
    <alternativeName>
        <fullName evidence="1">ATP synthase F(1) sector subunit delta</fullName>
    </alternativeName>
    <alternativeName>
        <fullName evidence="1">F-type ATPase subunit delta</fullName>
        <shortName evidence="1">F-ATPase subunit delta</shortName>
    </alternativeName>
</protein>
<accession>P26680</accession>
<accession>I6SYU5</accession>
<proteinExistence type="inferred from homology"/>
<feature type="chain" id="PRO_0000193464" description="ATP synthase subunit delta">
    <location>
        <begin position="1"/>
        <end position="180"/>
    </location>
</feature>
<comment type="function">
    <text evidence="1">F(1)F(0) ATP synthase produces ATP from ADP in the presence of a proton or sodium gradient. F-type ATPases consist of two structural domains, F(1) containing the extramembraneous catalytic core and F(0) containing the membrane proton channel, linked together by a central stalk and a peripheral stalk. During catalysis, ATP synthesis in the catalytic domain of F(1) is coupled via a rotary mechanism of the central stalk subunits to proton translocation.</text>
</comment>
<comment type="function">
    <text evidence="1">This protein is part of the stalk that links CF(0) to CF(1). It either transmits conformational changes from CF(0) to CF(1) or is implicated in proton conduction.</text>
</comment>
<comment type="subunit">
    <text evidence="1">F-type ATPases have 2 components, F(1) - the catalytic core - and F(0) - the membrane proton channel. F(1) has five subunits: alpha(3), beta(3), gamma(1), delta(1), epsilon(1). F(0) has three main subunits: a(1), b(2) and c(10-14). The alpha and beta chains form an alternating ring which encloses part of the gamma chain. F(1) is attached to F(0) by a central stalk formed by the gamma and epsilon chains, while a peripheral stalk is formed by the delta and b chains.</text>
</comment>
<comment type="subcellular location">
    <subcellularLocation>
        <location evidence="1">Cell membrane</location>
        <topology evidence="1">Peripheral membrane protein</topology>
    </subcellularLocation>
</comment>
<comment type="similarity">
    <text evidence="1">Belongs to the ATPase delta chain family.</text>
</comment>
<dbReference type="EMBL" id="M64265">
    <property type="protein sequence ID" value="AAA26863.1"/>
    <property type="molecule type" value="Genomic_DNA"/>
</dbReference>
<dbReference type="EMBL" id="M90060">
    <property type="protein sequence ID" value="AAA26856.1"/>
    <property type="molecule type" value="Genomic_DNA"/>
</dbReference>
<dbReference type="EMBL" id="CP003504">
    <property type="protein sequence ID" value="AFM70622.1"/>
    <property type="molecule type" value="Genomic_DNA"/>
</dbReference>
<dbReference type="PIR" id="E43259">
    <property type="entry name" value="E43259"/>
</dbReference>
<dbReference type="RefSeq" id="WP_010737988.1">
    <property type="nucleotide sequence ID" value="NZ_KB946231.1"/>
</dbReference>
<dbReference type="SMR" id="P26680"/>
<dbReference type="KEGG" id="ehr:EHR_08485"/>
<dbReference type="eggNOG" id="COG0712">
    <property type="taxonomic scope" value="Bacteria"/>
</dbReference>
<dbReference type="HOGENOM" id="CLU_085114_4_1_9"/>
<dbReference type="OrthoDB" id="9786633at2"/>
<dbReference type="Proteomes" id="UP000002895">
    <property type="component" value="Chromosome"/>
</dbReference>
<dbReference type="GO" id="GO:0005886">
    <property type="term" value="C:plasma membrane"/>
    <property type="evidence" value="ECO:0007669"/>
    <property type="project" value="UniProtKB-SubCell"/>
</dbReference>
<dbReference type="GO" id="GO:0045259">
    <property type="term" value="C:proton-transporting ATP synthase complex"/>
    <property type="evidence" value="ECO:0007669"/>
    <property type="project" value="UniProtKB-KW"/>
</dbReference>
<dbReference type="GO" id="GO:0046933">
    <property type="term" value="F:proton-transporting ATP synthase activity, rotational mechanism"/>
    <property type="evidence" value="ECO:0007669"/>
    <property type="project" value="UniProtKB-UniRule"/>
</dbReference>
<dbReference type="Gene3D" id="1.10.520.20">
    <property type="entry name" value="N-terminal domain of the delta subunit of the F1F0-ATP synthase"/>
    <property type="match status" value="1"/>
</dbReference>
<dbReference type="HAMAP" id="MF_01416">
    <property type="entry name" value="ATP_synth_delta_bact"/>
    <property type="match status" value="1"/>
</dbReference>
<dbReference type="InterPro" id="IPR026015">
    <property type="entry name" value="ATP_synth_OSCP/delta_N_sf"/>
</dbReference>
<dbReference type="InterPro" id="IPR020781">
    <property type="entry name" value="ATPase_OSCP/d_CS"/>
</dbReference>
<dbReference type="InterPro" id="IPR000711">
    <property type="entry name" value="ATPase_OSCP/dsu"/>
</dbReference>
<dbReference type="NCBIfam" id="TIGR01145">
    <property type="entry name" value="ATP_synt_delta"/>
    <property type="match status" value="1"/>
</dbReference>
<dbReference type="PANTHER" id="PTHR11910">
    <property type="entry name" value="ATP SYNTHASE DELTA CHAIN"/>
    <property type="match status" value="1"/>
</dbReference>
<dbReference type="Pfam" id="PF00213">
    <property type="entry name" value="OSCP"/>
    <property type="match status" value="1"/>
</dbReference>
<dbReference type="PRINTS" id="PR00125">
    <property type="entry name" value="ATPASEDELTA"/>
</dbReference>
<dbReference type="SUPFAM" id="SSF47928">
    <property type="entry name" value="N-terminal domain of the delta subunit of the F1F0-ATP synthase"/>
    <property type="match status" value="1"/>
</dbReference>
<dbReference type="PROSITE" id="PS00389">
    <property type="entry name" value="ATPASE_DELTA"/>
    <property type="match status" value="1"/>
</dbReference>
<sequence>MKLDKYTVGRRYGKALFELAIDSNSAEEIYQELLSLRQIYSEIPGLGNVLSDVRLEPHEKRIIMDKLVSGFDGIVKNFLEVVYSYNRMSELSFMIDEYEHRYNDYKGLLLGSVKTAVPLSDEQLQKLEMNVAKTMDYQTVELKQIVDSSIIGGAIVEANHRVIDGSIRTQLEKMRNQLNR</sequence>
<gene>
    <name evidence="1" type="primary">atpH</name>
    <name type="ordered locus">EHR_08485</name>
</gene>
<organism>
    <name type="scientific">Enterococcus hirae (strain ATCC 9790 / DSM 20160 / JCM 8729 / LMG 6399 / NBRC 3181 / NCIMB 6459 / NCDO 1258 / NCTC 12367 / WDCM 00089 / R)</name>
    <dbReference type="NCBI Taxonomy" id="768486"/>
    <lineage>
        <taxon>Bacteria</taxon>
        <taxon>Bacillati</taxon>
        <taxon>Bacillota</taxon>
        <taxon>Bacilli</taxon>
        <taxon>Lactobacillales</taxon>
        <taxon>Enterococcaceae</taxon>
        <taxon>Enterococcus</taxon>
    </lineage>
</organism>
<evidence type="ECO:0000255" key="1">
    <source>
        <dbReference type="HAMAP-Rule" id="MF_01416"/>
    </source>
</evidence>
<name>ATPD_ENTHA</name>
<keyword id="KW-0066">ATP synthesis</keyword>
<keyword id="KW-1003">Cell membrane</keyword>
<keyword id="KW-0139">CF(1)</keyword>
<keyword id="KW-0375">Hydrogen ion transport</keyword>
<keyword id="KW-0406">Ion transport</keyword>
<keyword id="KW-0472">Membrane</keyword>
<keyword id="KW-0813">Transport</keyword>